<keyword id="KW-0046">Antibiotic resistance</keyword>
<keyword id="KW-0997">Cell inner membrane</keyword>
<keyword id="KW-1003">Cell membrane</keyword>
<keyword id="KW-0445">Lipid transport</keyword>
<keyword id="KW-0446">Lipid-binding</keyword>
<keyword id="KW-0472">Membrane</keyword>
<keyword id="KW-1185">Reference proteome</keyword>
<keyword id="KW-0812">Transmembrane</keyword>
<keyword id="KW-1133">Transmembrane helix</keyword>
<keyword id="KW-0813">Transport</keyword>
<sequence length="514" mass="53771">MTHTATEPGTSLPLRHRSIAIGAGSLAVLLGALDTYVVVSVITDIMTSVGIALNNIQQVTPIVTGYLLGYIAAMPLLGQASDRFGRRLILQLALAGFAIGSVITALSTDLTMLVSGRVIQGVASGALLPVTLALGADLWSQRNRATVLGGIGAAQELGSVLGPLYGVLCVWLFGSWTAIFWVNVPLAIIAIVLVQFSVPAHQHDPDRPKVDVVGGALLAVALGLLVVGLYSPDPKVSALPEWALPVLSGSGVAFLAFILWESRAKTRLIKPEGVRFGPFFAALAASLAAGAALMVTLVNIELLGQGVLQMDKADAVFLLSRFLVALPIGAVIGGWLATRFGDRIIAVIGMLIAAFGYYLISGWPVDVLAAVHNFGFFTLPRLDTDLVVAGIGLGLVIGPLSSAALRVVPAAQHGIASALVVVARMTGMLIGMAALGGWGIHRFYQNFDALAAKEPKPTGKPNLLELQQQLLNRSITAYSEMYSEMFAITAVVCVIAAVIAIFVGSHRKSGHEAQ</sequence>
<protein>
    <recommendedName>
        <fullName evidence="6">Triacylglyceride transporter MAB_2807</fullName>
    </recommendedName>
    <alternativeName>
        <fullName evidence="5">MFS-type drug efflux transporter P55</fullName>
    </alternativeName>
</protein>
<comment type="function">
    <text evidence="1 2 4 7">In association with lipoprotein LprG probably transports triacyglycerides (TAG) across the inner cell membrane into the periplasm; TAG probably regulates lipid metabolism and growth regulation and plays a structural role in the outer membrane (By similarity). TAG (and maybe other lipids) enters the central cavity of the P55 transporter from within the cell inner membrane via clefts on the cytoplasmic face of P55 between TM5-TM8 and TM2-TM11 (By similarity). From there the lipid is probably transferred to the hydrophobic cavity of LprG (By similarity). Involved in drug susceptibilty, its expression partially complements the antibiotic susceptibilty of a double lprG-mfs deletion (PubMed:30742339). Probably does not function as a bona fide drug efflux pump, but instead plays a role in outer membrane biogenesis (Probable) (PubMed:30742339). Probably required with LprG for normal surface localization of lipoarabinomannan (LAM).</text>
</comment>
<comment type="subcellular location">
    <subcellularLocation>
        <location evidence="3">Cell inner membrane</location>
        <topology evidence="1">Multi-pass membrane protein</topology>
    </subcellularLocation>
</comment>
<comment type="induction">
    <text evidence="4">Part of the lrpG-mfs (MAB_2807) operon (PubMed:30742339).</text>
</comment>
<comment type="domain">
    <text evidence="1">Has a canonical major facilitator superfamily fold with two N- and C-terminal domains of 6 transmembrane helices (TM 1-6 and 7-12) and two other transmembrane helices between the domains (TMA and TMB) that form a hairpin. Between TM9-TM10 is a periplasmic beta-hairpin that extends along the membrane plane, TM11 and TM12 helices extend into the periplasm. Asp-34 is a possible protonation/deprotonation site.</text>
</comment>
<comment type="disruption phenotype">
    <text evidence="4">A double lprG-mfs deletion strain is more sensitive to the antibiotics tetracyline, vancomycin, rifabutin, clofazimine, novobiocin and ofloxacin (PubMed:30742339).</text>
</comment>
<comment type="miscellaneous">
    <text evidence="6">Bacterial LAM blocks host cell phagosome-lysosome fusion and is one way in which Mycobacteria evade the host immune system.</text>
</comment>
<comment type="miscellaneous">
    <text evidence="6">Triacylglycerides accumulate in lipid droplets in the cytoplasm of M.tuberculosis stationary phase and dormant bacteria, and are used as an energy source during starvation.</text>
</comment>
<comment type="similarity">
    <text evidence="6">Belongs to the major facilitator superfamily. P55 (TC 2.A.1.3.34) family.</text>
</comment>
<accession>B1MCB5</accession>
<feature type="chain" id="PRO_0000460925" description="Triacylglyceride transporter MAB_2807">
    <location>
        <begin position="1"/>
        <end position="514"/>
    </location>
</feature>
<feature type="transmembrane region" description="Helical; Name=TM1" evidence="3">
    <location>
        <begin position="19"/>
        <end position="39"/>
    </location>
</feature>
<feature type="transmembrane region" description="Helical; Name=TM2" evidence="3">
    <location>
        <begin position="58"/>
        <end position="78"/>
    </location>
</feature>
<feature type="transmembrane region" description="Helical; Name=TM3" evidence="3">
    <location>
        <begin position="88"/>
        <end position="108"/>
    </location>
</feature>
<feature type="transmembrane region" description="Helical; Name=TM4" evidence="3">
    <location>
        <begin position="118"/>
        <end position="138"/>
    </location>
</feature>
<feature type="transmembrane region" description="Helical; Name=TM5" evidence="3">
    <location>
        <begin position="157"/>
        <end position="177"/>
    </location>
</feature>
<feature type="transmembrane region" description="Helical; Name=TM6" evidence="3">
    <location>
        <begin position="178"/>
        <end position="198"/>
    </location>
</feature>
<feature type="transmembrane region" description="Helical; Name=TMA" evidence="3">
    <location>
        <begin position="210"/>
        <end position="230"/>
    </location>
</feature>
<feature type="transmembrane region" description="Helical; Name=TMB" evidence="3">
    <location>
        <begin position="239"/>
        <end position="259"/>
    </location>
</feature>
<feature type="transmembrane region" description="Helical; Name=TM7" evidence="3">
    <location>
        <begin position="278"/>
        <end position="298"/>
    </location>
</feature>
<feature type="transmembrane region" description="Helical; Name=TM8" evidence="3">
    <location>
        <begin position="316"/>
        <end position="336"/>
    </location>
</feature>
<feature type="transmembrane region" description="Helical; Name=TM9" evidence="3">
    <location>
        <begin position="344"/>
        <end position="364"/>
    </location>
</feature>
<feature type="transmembrane region" description="Helical; Name=TM10" evidence="3">
    <location>
        <begin position="385"/>
        <end position="405"/>
    </location>
</feature>
<feature type="transmembrane region" description="Helical; Name=TM11" evidence="3">
    <location>
        <begin position="420"/>
        <end position="440"/>
    </location>
</feature>
<feature type="transmembrane region" description="Helical; Name=TM12" evidence="3">
    <location>
        <begin position="485"/>
        <end position="505"/>
    </location>
</feature>
<feature type="region of interest" description="Beta-hairpin" evidence="1">
    <location>
        <begin position="371"/>
        <end position="380"/>
    </location>
</feature>
<feature type="site" description="Protonation/deprotonation site" evidence="1">
    <location>
        <position position="34"/>
    </location>
</feature>
<feature type="site" description="Forms salt bridge with Arg-426, probably closes bottom of cavity" evidence="1">
    <location>
        <position position="156"/>
    </location>
</feature>
<feature type="site" description="Forms salt bridge with Gln-157, probably closes bottom of cavity" evidence="1">
    <location>
        <position position="424"/>
    </location>
</feature>
<feature type="mutagenesis site" description="Does not complement a deletion of this operon for antibiotic resistance in situ or in M.smegmatis." evidence="4">
    <original>D</original>
    <variation>N</variation>
    <location>
        <position position="82"/>
    </location>
</feature>
<dbReference type="EMBL" id="CU458896">
    <property type="protein sequence ID" value="CAM62886.1"/>
    <property type="molecule type" value="Genomic_DNA"/>
</dbReference>
<dbReference type="RefSeq" id="WP_005082328.1">
    <property type="nucleotide sequence ID" value="NZ_MLCG01000003.1"/>
</dbReference>
<dbReference type="SMR" id="B1MCB5"/>
<dbReference type="GeneID" id="93379738"/>
<dbReference type="KEGG" id="mab:MAB_2807"/>
<dbReference type="Proteomes" id="UP000007137">
    <property type="component" value="Chromosome"/>
</dbReference>
<dbReference type="GO" id="GO:0005886">
    <property type="term" value="C:plasma membrane"/>
    <property type="evidence" value="ECO:0007669"/>
    <property type="project" value="UniProtKB-SubCell"/>
</dbReference>
<dbReference type="GO" id="GO:0008289">
    <property type="term" value="F:lipid binding"/>
    <property type="evidence" value="ECO:0007669"/>
    <property type="project" value="UniProtKB-KW"/>
</dbReference>
<dbReference type="GO" id="GO:0022857">
    <property type="term" value="F:transmembrane transporter activity"/>
    <property type="evidence" value="ECO:0007669"/>
    <property type="project" value="InterPro"/>
</dbReference>
<dbReference type="GO" id="GO:0006869">
    <property type="term" value="P:lipid transport"/>
    <property type="evidence" value="ECO:0007669"/>
    <property type="project" value="UniProtKB-KW"/>
</dbReference>
<dbReference type="GO" id="GO:0046677">
    <property type="term" value="P:response to antibiotic"/>
    <property type="evidence" value="ECO:0007669"/>
    <property type="project" value="UniProtKB-KW"/>
</dbReference>
<dbReference type="CDD" id="cd17321">
    <property type="entry name" value="MFS_MMR_MDR_like"/>
    <property type="match status" value="1"/>
</dbReference>
<dbReference type="Gene3D" id="1.20.1250.20">
    <property type="entry name" value="MFS general substrate transporter like domains"/>
    <property type="match status" value="2"/>
</dbReference>
<dbReference type="InterPro" id="IPR011701">
    <property type="entry name" value="MFS"/>
</dbReference>
<dbReference type="InterPro" id="IPR020846">
    <property type="entry name" value="MFS_dom"/>
</dbReference>
<dbReference type="InterPro" id="IPR036259">
    <property type="entry name" value="MFS_trans_sf"/>
</dbReference>
<dbReference type="InterPro" id="IPR005829">
    <property type="entry name" value="Sugar_transporter_CS"/>
</dbReference>
<dbReference type="PANTHER" id="PTHR23501">
    <property type="entry name" value="MAJOR FACILITATOR SUPERFAMILY"/>
    <property type="match status" value="1"/>
</dbReference>
<dbReference type="PANTHER" id="PTHR23501:SF191">
    <property type="entry name" value="VACUOLAR BASIC AMINO ACID TRANSPORTER 4"/>
    <property type="match status" value="1"/>
</dbReference>
<dbReference type="Pfam" id="PF07690">
    <property type="entry name" value="MFS_1"/>
    <property type="match status" value="1"/>
</dbReference>
<dbReference type="SUPFAM" id="SSF103473">
    <property type="entry name" value="MFS general substrate transporter"/>
    <property type="match status" value="1"/>
</dbReference>
<dbReference type="PROSITE" id="PS50850">
    <property type="entry name" value="MFS"/>
    <property type="match status" value="1"/>
</dbReference>
<dbReference type="PROSITE" id="PS00216">
    <property type="entry name" value="SUGAR_TRANSPORT_1"/>
    <property type="match status" value="1"/>
</dbReference>
<proteinExistence type="evidence at protein level"/>
<reference evidence="8" key="1">
    <citation type="journal article" date="2009" name="PLoS ONE">
        <title>Non mycobacterial virulence genes in the genome of the emerging pathogen Mycobacterium abscessus.</title>
        <authorList>
            <person name="Ripoll F."/>
            <person name="Pasek S."/>
            <person name="Schenowitz C."/>
            <person name="Dossat C."/>
            <person name="Barbe V."/>
            <person name="Rottman M."/>
            <person name="Macheras E."/>
            <person name="Heym B."/>
            <person name="Herrmann J.L."/>
            <person name="Daffe M."/>
            <person name="Brosch R."/>
            <person name="Risler J.L."/>
            <person name="Gaillard J.L."/>
        </authorList>
    </citation>
    <scope>NUCLEOTIDE SEQUENCE [LARGE SCALE GENOMIC DNA]</scope>
    <source>
        <strain>ATCC 19977 / DSM 44196 / CCUG 20993 / CIP 104536 / JCM 13569 / NCTC 13031 / TMC 1543 / L948</strain>
    </source>
</reference>
<reference key="2">
    <citation type="journal article" date="2019" name="Mol. Microbiol.">
        <title>Increased drug permeability of a stiffened mycobacterial outer membrane in cells lacking MFS transporter Rv1410 and lipoprotein LprG.</title>
        <authorList>
            <person name="Hohl M."/>
            <person name="Remm S."/>
            <person name="Eskandarian H.A."/>
            <person name="Dal Molin M."/>
            <person name="Arnold F.M."/>
            <person name="Huerlimann L.M."/>
            <person name="Kruegel A."/>
            <person name="Fantner G.E."/>
            <person name="Sander P."/>
            <person name="Seeger M.A."/>
        </authorList>
    </citation>
    <scope>FUNCTION</scope>
    <scope>OPERON STRUCTURE</scope>
    <scope>DISRUPTION PHENOTYPE</scope>
    <scope>MUTAGENESIS OF ASP-82</scope>
    <source>
        <strain>ATCC 19977 / DSM 44196 / CCUG 20993 / CIP 104536 / JCM 13569 / NCTC 13031 / TMC 1543 / L948</strain>
    </source>
</reference>
<organism>
    <name type="scientific">Mycobacteroides abscessus (strain ATCC 19977 / DSM 44196 / CCUG 20993 / CIP 104536 / JCM 13569 / NCTC 13031 / TMC 1543 / L948)</name>
    <name type="common">Mycobacterium abscessus</name>
    <dbReference type="NCBI Taxonomy" id="561007"/>
    <lineage>
        <taxon>Bacteria</taxon>
        <taxon>Bacillati</taxon>
        <taxon>Actinomycetota</taxon>
        <taxon>Actinomycetes</taxon>
        <taxon>Mycobacteriales</taxon>
        <taxon>Mycobacteriaceae</taxon>
        <taxon>Mycobacteroides</taxon>
        <taxon>Mycobacteroides abscessus</taxon>
    </lineage>
</organism>
<gene>
    <name evidence="5" type="primary">mfs</name>
    <name evidence="8" type="ordered locus">MAB_2807</name>
</gene>
<name>MFS55_MYCA9</name>
<evidence type="ECO:0000250" key="1">
    <source>
        <dbReference type="UniProtKB" id="K5B8L6"/>
    </source>
</evidence>
<evidence type="ECO:0000250" key="2">
    <source>
        <dbReference type="UniProtKB" id="P9WJY3"/>
    </source>
</evidence>
<evidence type="ECO:0000255" key="3"/>
<evidence type="ECO:0000269" key="4">
    <source>
    </source>
</evidence>
<evidence type="ECO:0000303" key="5">
    <source>
    </source>
</evidence>
<evidence type="ECO:0000305" key="6"/>
<evidence type="ECO:0000305" key="7">
    <source>
    </source>
</evidence>
<evidence type="ECO:0000312" key="8">
    <source>
        <dbReference type="EMBL" id="CAM62886.1"/>
    </source>
</evidence>